<gene>
    <name evidence="1" type="primary">sepS</name>
    <name type="ordered locus">Mbur_0923</name>
</gene>
<name>SEPS_METBU</name>
<proteinExistence type="inferred from homology"/>
<reference key="1">
    <citation type="journal article" date="2009" name="ISME J.">
        <title>The genome sequence of the psychrophilic archaeon, Methanococcoides burtonii: the role of genome evolution in cold adaptation.</title>
        <authorList>
            <person name="Allen M.A."/>
            <person name="Lauro F.M."/>
            <person name="Williams T.J."/>
            <person name="Burg D."/>
            <person name="Siddiqui K.S."/>
            <person name="De Francisci D."/>
            <person name="Chong K.W."/>
            <person name="Pilak O."/>
            <person name="Chew H.H."/>
            <person name="De Maere M.Z."/>
            <person name="Ting L."/>
            <person name="Katrib M."/>
            <person name="Ng C."/>
            <person name="Sowers K.R."/>
            <person name="Galperin M.Y."/>
            <person name="Anderson I.J."/>
            <person name="Ivanova N."/>
            <person name="Dalin E."/>
            <person name="Martinez M."/>
            <person name="Lapidus A."/>
            <person name="Hauser L."/>
            <person name="Land M."/>
            <person name="Thomas T."/>
            <person name="Cavicchioli R."/>
        </authorList>
    </citation>
    <scope>NUCLEOTIDE SEQUENCE [LARGE SCALE GENOMIC DNA]</scope>
    <source>
        <strain>DSM 6242 / NBRC 107633 / OCM 468 / ACE-M</strain>
    </source>
</reference>
<protein>
    <recommendedName>
        <fullName evidence="1">O-phosphoserine--tRNA(Cys) ligase</fullName>
        <shortName evidence="1">O-phosphoserine--tRNA ligase</shortName>
        <ecNumber evidence="1">6.1.1.27</ecNumber>
    </recommendedName>
    <alternativeName>
        <fullName evidence="1">Non-canonical O-phosphoseryl-tRNA(Cys) synthetase</fullName>
    </alternativeName>
    <alternativeName>
        <fullName evidence="1">O-phosphoseryl-tRNA(Cys) synthetase</fullName>
        <shortName evidence="1">SepRS</shortName>
    </alternativeName>
</protein>
<comment type="function">
    <text evidence="1">Catalyzes the attachment of O-phosphoserine (Sep) to tRNA(Cys).</text>
</comment>
<comment type="catalytic activity">
    <reaction evidence="1">
        <text>tRNA(Cys) + O-phospho-L-serine + ATP = O-phospho-L-seryl-tRNA(Cys) + AMP + diphosphate</text>
        <dbReference type="Rhea" id="RHEA:25678"/>
        <dbReference type="Rhea" id="RHEA-COMP:9661"/>
        <dbReference type="Rhea" id="RHEA-COMP:9719"/>
        <dbReference type="ChEBI" id="CHEBI:30616"/>
        <dbReference type="ChEBI" id="CHEBI:33019"/>
        <dbReference type="ChEBI" id="CHEBI:57524"/>
        <dbReference type="ChEBI" id="CHEBI:78442"/>
        <dbReference type="ChEBI" id="CHEBI:78551"/>
        <dbReference type="ChEBI" id="CHEBI:456215"/>
        <dbReference type="EC" id="6.1.1.27"/>
    </reaction>
</comment>
<comment type="subunit">
    <text evidence="1">Homotetramer. Interacts with SepCysS.</text>
</comment>
<comment type="similarity">
    <text evidence="1">Belongs to the class-II aminoacyl-tRNA synthetase family. O-phosphoseryl-tRNA(Cys) synthetase subfamily.</text>
</comment>
<evidence type="ECO:0000255" key="1">
    <source>
        <dbReference type="HAMAP-Rule" id="MF_01674"/>
    </source>
</evidence>
<dbReference type="EC" id="6.1.1.27" evidence="1"/>
<dbReference type="EMBL" id="CP000300">
    <property type="protein sequence ID" value="ABE51866.1"/>
    <property type="molecule type" value="Genomic_DNA"/>
</dbReference>
<dbReference type="RefSeq" id="WP_011499016.1">
    <property type="nucleotide sequence ID" value="NC_007955.1"/>
</dbReference>
<dbReference type="SMR" id="Q12XG0"/>
<dbReference type="STRING" id="259564.Mbur_0923"/>
<dbReference type="GeneID" id="3998666"/>
<dbReference type="KEGG" id="mbu:Mbur_0923"/>
<dbReference type="HOGENOM" id="CLU_506822_0_0_2"/>
<dbReference type="OrthoDB" id="145125at2157"/>
<dbReference type="Proteomes" id="UP000001979">
    <property type="component" value="Chromosome"/>
</dbReference>
<dbReference type="GO" id="GO:0005524">
    <property type="term" value="F:ATP binding"/>
    <property type="evidence" value="ECO:0007669"/>
    <property type="project" value="UniProtKB-UniRule"/>
</dbReference>
<dbReference type="GO" id="GO:0043816">
    <property type="term" value="F:phosphoserine-tRNA(Cys) ligase activity"/>
    <property type="evidence" value="ECO:0007669"/>
    <property type="project" value="UniProtKB-EC"/>
</dbReference>
<dbReference type="GO" id="GO:0000049">
    <property type="term" value="F:tRNA binding"/>
    <property type="evidence" value="ECO:0007669"/>
    <property type="project" value="InterPro"/>
</dbReference>
<dbReference type="GO" id="GO:0006412">
    <property type="term" value="P:translation"/>
    <property type="evidence" value="ECO:0007669"/>
    <property type="project" value="UniProtKB-KW"/>
</dbReference>
<dbReference type="GO" id="GO:0043039">
    <property type="term" value="P:tRNA aminoacylation"/>
    <property type="evidence" value="ECO:0007669"/>
    <property type="project" value="UniProtKB-UniRule"/>
</dbReference>
<dbReference type="FunFam" id="3.30.930.10:FF:000139">
    <property type="entry name" value="O-phosphoserine--tRNA(Cys) ligase"/>
    <property type="match status" value="1"/>
</dbReference>
<dbReference type="Gene3D" id="6.20.250.20">
    <property type="match status" value="1"/>
</dbReference>
<dbReference type="Gene3D" id="3.30.930.10">
    <property type="entry name" value="Bira Bifunctional Protein, Domain 2"/>
    <property type="match status" value="1"/>
</dbReference>
<dbReference type="HAMAP" id="MF_01674">
    <property type="entry name" value="Sep_tRNA_synth"/>
    <property type="match status" value="1"/>
</dbReference>
<dbReference type="InterPro" id="IPR006195">
    <property type="entry name" value="aa-tRNA-synth_II"/>
</dbReference>
<dbReference type="InterPro" id="IPR045864">
    <property type="entry name" value="aa-tRNA-synth_II/BPL/LPL"/>
</dbReference>
<dbReference type="InterPro" id="IPR005246">
    <property type="entry name" value="O-Pseryl-tRNA(Cys)_ligase"/>
</dbReference>
<dbReference type="InterPro" id="IPR002319">
    <property type="entry name" value="Phenylalanyl-tRNA_Synthase"/>
</dbReference>
<dbReference type="InterPro" id="IPR041590">
    <property type="entry name" value="SepRS_C"/>
</dbReference>
<dbReference type="NCBIfam" id="TIGR00470">
    <property type="entry name" value="sepS"/>
    <property type="match status" value="1"/>
</dbReference>
<dbReference type="Pfam" id="PF18006">
    <property type="entry name" value="SepRS_C"/>
    <property type="match status" value="1"/>
</dbReference>
<dbReference type="Pfam" id="PF01409">
    <property type="entry name" value="tRNA-synt_2d"/>
    <property type="match status" value="1"/>
</dbReference>
<dbReference type="SUPFAM" id="SSF55681">
    <property type="entry name" value="Class II aaRS and biotin synthetases"/>
    <property type="match status" value="1"/>
</dbReference>
<dbReference type="PROSITE" id="PS50862">
    <property type="entry name" value="AA_TRNA_LIGASE_II"/>
    <property type="match status" value="1"/>
</dbReference>
<keyword id="KW-0030">Aminoacyl-tRNA synthetase</keyword>
<keyword id="KW-0067">ATP-binding</keyword>
<keyword id="KW-0436">Ligase</keyword>
<keyword id="KW-0547">Nucleotide-binding</keyword>
<keyword id="KW-0648">Protein biosynthesis</keyword>
<feature type="chain" id="PRO_0000363748" description="O-phosphoserine--tRNA(Cys) ligase">
    <location>
        <begin position="1"/>
        <end position="539"/>
    </location>
</feature>
<feature type="binding site" evidence="1">
    <location>
        <begin position="188"/>
        <end position="190"/>
    </location>
    <ligand>
        <name>substrate</name>
    </ligand>
</feature>
<feature type="binding site" evidence="1">
    <location>
        <begin position="233"/>
        <end position="235"/>
    </location>
    <ligand>
        <name>substrate</name>
    </ligand>
</feature>
<feature type="binding site" evidence="1">
    <location>
        <begin position="275"/>
        <end position="276"/>
    </location>
    <ligand>
        <name>substrate</name>
    </ligand>
</feature>
<feature type="binding site" evidence="1">
    <location>
        <position position="327"/>
    </location>
    <ligand>
        <name>substrate</name>
    </ligand>
</feature>
<sequence>MKFDPESIKKAAKEDFDSAWTSGKDLIKKTGLNQQYPHTSFHFGKAHPVYDTIAKLREAYLRMGFDEMMNPLIVDEKEVYKQFGHEALAVLDRCYYLAGLPRPNVGISDQRIAKIKEMLGGIDDEGIETIRKVLHSYKKGEVEGDDLVPEIALKLNVSDALVVEMIDKVFPEFKELTPQATTKTLRSHMTSGWFISLSGILERSRPPFHLFSIDRSFRREQQEDASRLMTYYSASCVIMDEDVTVDHGKAVAQGLLAQFGFEKFMFRPDEKRSKYYVPDTQIEVFAYHPKLVGSNTKYSDGWIEIATFGIYSPTALAEYNIPCPVMNLGLGVERLAMILHDSTDLRGMTYPQLPQYAEWELKDNELARMIFVDKLPETPEGQEILEGIVMQCDMHGSEPSPCEFVAWEGILKGKKVKVSVIEPEEDTKLCGPAAYNEVLVHENDVLGLPNNKKWKKAFENHSARTGVRFIEAFAAQAAKEIEEAVEKGEKECETRVRIVKVPSEINIKLDPLAQRYITGKKQKIDIRGPVFTTVRAEIE</sequence>
<accession>Q12XG0</accession>
<organism>
    <name type="scientific">Methanococcoides burtonii (strain DSM 6242 / NBRC 107633 / OCM 468 / ACE-M)</name>
    <dbReference type="NCBI Taxonomy" id="259564"/>
    <lineage>
        <taxon>Archaea</taxon>
        <taxon>Methanobacteriati</taxon>
        <taxon>Methanobacteriota</taxon>
        <taxon>Stenosarchaea group</taxon>
        <taxon>Methanomicrobia</taxon>
        <taxon>Methanosarcinales</taxon>
        <taxon>Methanosarcinaceae</taxon>
        <taxon>Methanococcoides</taxon>
    </lineage>
</organism>